<gene>
    <name evidence="1" type="primary">rimK</name>
    <name type="ordered locus">SbBS512_E2480</name>
</gene>
<accession>B2TUM8</accession>
<name>RIMK_SHIB3</name>
<dbReference type="EC" id="6.3.2.-" evidence="1"/>
<dbReference type="EMBL" id="CP001063">
    <property type="protein sequence ID" value="ACD08108.1"/>
    <property type="molecule type" value="Genomic_DNA"/>
</dbReference>
<dbReference type="RefSeq" id="WP_000684324.1">
    <property type="nucleotide sequence ID" value="NC_010658.1"/>
</dbReference>
<dbReference type="SMR" id="B2TUM8"/>
<dbReference type="STRING" id="344609.SbBS512_E2480"/>
<dbReference type="KEGG" id="sbc:SbBS512_E2480"/>
<dbReference type="HOGENOM" id="CLU_054353_0_1_6"/>
<dbReference type="Proteomes" id="UP000001030">
    <property type="component" value="Chromosome"/>
</dbReference>
<dbReference type="GO" id="GO:0005737">
    <property type="term" value="C:cytoplasm"/>
    <property type="evidence" value="ECO:0007669"/>
    <property type="project" value="TreeGrafter"/>
</dbReference>
<dbReference type="GO" id="GO:0005524">
    <property type="term" value="F:ATP binding"/>
    <property type="evidence" value="ECO:0007669"/>
    <property type="project" value="UniProtKB-UniRule"/>
</dbReference>
<dbReference type="GO" id="GO:0046872">
    <property type="term" value="F:metal ion binding"/>
    <property type="evidence" value="ECO:0007669"/>
    <property type="project" value="UniProtKB-KW"/>
</dbReference>
<dbReference type="GO" id="GO:0018169">
    <property type="term" value="F:ribosomal S6-glutamic acid ligase activity"/>
    <property type="evidence" value="ECO:0007669"/>
    <property type="project" value="UniProtKB-UniRule"/>
</dbReference>
<dbReference type="GO" id="GO:0036211">
    <property type="term" value="P:protein modification process"/>
    <property type="evidence" value="ECO:0007669"/>
    <property type="project" value="InterPro"/>
</dbReference>
<dbReference type="GO" id="GO:0009432">
    <property type="term" value="P:SOS response"/>
    <property type="evidence" value="ECO:0007669"/>
    <property type="project" value="TreeGrafter"/>
</dbReference>
<dbReference type="GO" id="GO:0006412">
    <property type="term" value="P:translation"/>
    <property type="evidence" value="ECO:0007669"/>
    <property type="project" value="UniProtKB-KW"/>
</dbReference>
<dbReference type="FunFam" id="3.40.50.20:FF:000004">
    <property type="entry name" value="Probable alpha-L-glutamate ligase"/>
    <property type="match status" value="1"/>
</dbReference>
<dbReference type="FunFam" id="3.30.1490.20:FF:000005">
    <property type="entry name" value="Probable alpha-L-glutamate ligase 1"/>
    <property type="match status" value="1"/>
</dbReference>
<dbReference type="FunFam" id="3.30.470.20:FF:000016">
    <property type="entry name" value="Ribosomal protein S6--L-glutamate ligase"/>
    <property type="match status" value="1"/>
</dbReference>
<dbReference type="Gene3D" id="3.40.50.20">
    <property type="match status" value="1"/>
</dbReference>
<dbReference type="Gene3D" id="3.30.1490.20">
    <property type="entry name" value="ATP-grasp fold, A domain"/>
    <property type="match status" value="1"/>
</dbReference>
<dbReference type="Gene3D" id="3.30.470.20">
    <property type="entry name" value="ATP-grasp fold, B domain"/>
    <property type="match status" value="1"/>
</dbReference>
<dbReference type="HAMAP" id="MF_01552">
    <property type="entry name" value="RimK"/>
    <property type="match status" value="1"/>
</dbReference>
<dbReference type="InterPro" id="IPR011761">
    <property type="entry name" value="ATP-grasp"/>
</dbReference>
<dbReference type="InterPro" id="IPR013651">
    <property type="entry name" value="ATP-grasp_RimK-type"/>
</dbReference>
<dbReference type="InterPro" id="IPR013815">
    <property type="entry name" value="ATP_grasp_subdomain_1"/>
</dbReference>
<dbReference type="InterPro" id="IPR023533">
    <property type="entry name" value="RimK"/>
</dbReference>
<dbReference type="InterPro" id="IPR041107">
    <property type="entry name" value="Rimk_N"/>
</dbReference>
<dbReference type="InterPro" id="IPR004666">
    <property type="entry name" value="Rp_bS6_RimK/Lys_biosynth_LsyX"/>
</dbReference>
<dbReference type="NCBIfam" id="NF007764">
    <property type="entry name" value="PRK10446.1"/>
    <property type="match status" value="1"/>
</dbReference>
<dbReference type="NCBIfam" id="TIGR00768">
    <property type="entry name" value="rimK_fam"/>
    <property type="match status" value="1"/>
</dbReference>
<dbReference type="PANTHER" id="PTHR21621:SF7">
    <property type="entry name" value="RIBOSOMAL PROTEIN BS6--L-GLUTAMATE LIGASE"/>
    <property type="match status" value="1"/>
</dbReference>
<dbReference type="PANTHER" id="PTHR21621">
    <property type="entry name" value="RIBOSOMAL PROTEIN S6 MODIFICATION PROTEIN"/>
    <property type="match status" value="1"/>
</dbReference>
<dbReference type="Pfam" id="PF08443">
    <property type="entry name" value="RimK"/>
    <property type="match status" value="1"/>
</dbReference>
<dbReference type="Pfam" id="PF18030">
    <property type="entry name" value="Rimk_N"/>
    <property type="match status" value="1"/>
</dbReference>
<dbReference type="SUPFAM" id="SSF56059">
    <property type="entry name" value="Glutathione synthetase ATP-binding domain-like"/>
    <property type="match status" value="1"/>
</dbReference>
<dbReference type="PROSITE" id="PS50975">
    <property type="entry name" value="ATP_GRASP"/>
    <property type="match status" value="1"/>
</dbReference>
<organism>
    <name type="scientific">Shigella boydii serotype 18 (strain CDC 3083-94 / BS512)</name>
    <dbReference type="NCBI Taxonomy" id="344609"/>
    <lineage>
        <taxon>Bacteria</taxon>
        <taxon>Pseudomonadati</taxon>
        <taxon>Pseudomonadota</taxon>
        <taxon>Gammaproteobacteria</taxon>
        <taxon>Enterobacterales</taxon>
        <taxon>Enterobacteriaceae</taxon>
        <taxon>Shigella</taxon>
    </lineage>
</organism>
<reference key="1">
    <citation type="submission" date="2008-05" db="EMBL/GenBank/DDBJ databases">
        <title>Complete sequence of Shigella boydii serotype 18 strain BS512.</title>
        <authorList>
            <person name="Rasko D.A."/>
            <person name="Rosovitz M."/>
            <person name="Maurelli A.T."/>
            <person name="Myers G."/>
            <person name="Seshadri R."/>
            <person name="Cer R."/>
            <person name="Jiang L."/>
            <person name="Ravel J."/>
            <person name="Sebastian Y."/>
        </authorList>
    </citation>
    <scope>NUCLEOTIDE SEQUENCE [LARGE SCALE GENOMIC DNA]</scope>
    <source>
        <strain>CDC 3083-94 / BS512</strain>
    </source>
</reference>
<proteinExistence type="inferred from homology"/>
<protein>
    <recommendedName>
        <fullName evidence="1">Ribosomal protein bS6--L-glutamate ligase</fullName>
        <ecNumber evidence="1">6.3.2.-</ecNumber>
    </recommendedName>
    <alternativeName>
        <fullName evidence="1">Poly-alpha-glutamate synthase</fullName>
    </alternativeName>
    <alternativeName>
        <fullName evidence="1">Ribosomal protein bS6 modification protein</fullName>
    </alternativeName>
</protein>
<feature type="chain" id="PRO_1000146949" description="Ribosomal protein bS6--L-glutamate ligase">
    <location>
        <begin position="1"/>
        <end position="300"/>
    </location>
</feature>
<feature type="domain" description="ATP-grasp" evidence="1">
    <location>
        <begin position="104"/>
        <end position="287"/>
    </location>
</feature>
<feature type="binding site" evidence="1">
    <location>
        <position position="141"/>
    </location>
    <ligand>
        <name>ATP</name>
        <dbReference type="ChEBI" id="CHEBI:30616"/>
    </ligand>
</feature>
<feature type="binding site" evidence="1">
    <location>
        <begin position="178"/>
        <end position="179"/>
    </location>
    <ligand>
        <name>ATP</name>
        <dbReference type="ChEBI" id="CHEBI:30616"/>
    </ligand>
</feature>
<feature type="binding site" evidence="1">
    <location>
        <position position="187"/>
    </location>
    <ligand>
        <name>ATP</name>
        <dbReference type="ChEBI" id="CHEBI:30616"/>
    </ligand>
</feature>
<feature type="binding site" evidence="1">
    <location>
        <begin position="211"/>
        <end position="213"/>
    </location>
    <ligand>
        <name>ATP</name>
        <dbReference type="ChEBI" id="CHEBI:30616"/>
    </ligand>
</feature>
<feature type="binding site" evidence="1">
    <location>
        <position position="248"/>
    </location>
    <ligand>
        <name>Mg(2+)</name>
        <dbReference type="ChEBI" id="CHEBI:18420"/>
        <label>1</label>
    </ligand>
</feature>
<feature type="binding site" evidence="1">
    <location>
        <position position="248"/>
    </location>
    <ligand>
        <name>Mn(2+)</name>
        <dbReference type="ChEBI" id="CHEBI:29035"/>
        <label>1</label>
    </ligand>
</feature>
<feature type="binding site" evidence="1">
    <location>
        <position position="260"/>
    </location>
    <ligand>
        <name>Mg(2+)</name>
        <dbReference type="ChEBI" id="CHEBI:18420"/>
        <label>1</label>
    </ligand>
</feature>
<feature type="binding site" evidence="1">
    <location>
        <position position="260"/>
    </location>
    <ligand>
        <name>Mg(2+)</name>
        <dbReference type="ChEBI" id="CHEBI:18420"/>
        <label>2</label>
    </ligand>
</feature>
<feature type="binding site" evidence="1">
    <location>
        <position position="260"/>
    </location>
    <ligand>
        <name>Mn(2+)</name>
        <dbReference type="ChEBI" id="CHEBI:29035"/>
        <label>1</label>
    </ligand>
</feature>
<feature type="binding site" evidence="1">
    <location>
        <position position="260"/>
    </location>
    <ligand>
        <name>Mn(2+)</name>
        <dbReference type="ChEBI" id="CHEBI:29035"/>
        <label>2</label>
    </ligand>
</feature>
<feature type="binding site" evidence="1">
    <location>
        <position position="262"/>
    </location>
    <ligand>
        <name>Mg(2+)</name>
        <dbReference type="ChEBI" id="CHEBI:18420"/>
        <label>2</label>
    </ligand>
</feature>
<feature type="binding site" evidence="1">
    <location>
        <position position="262"/>
    </location>
    <ligand>
        <name>Mn(2+)</name>
        <dbReference type="ChEBI" id="CHEBI:29035"/>
        <label>2</label>
    </ligand>
</feature>
<sequence>MKIAILSRDGTLYSCKRLREAAIQRGHLVEILDPLSCYMNINPAASSIHYKGRKLPHFDAVIPRIGTAITFYGTAALRQFEMLGSYPLNESVAIARARDKLRSMQLLARQGIDLPVTGIAHSPDDTSDLIDMVGGAPLVVKLVEGTQGIGVVLAETRQAAESVIDAFRGLNAHILVQEYIKEAQGCDIRCLVVGDEVVAAIERRAKEGDFRSNLHRGGAASVASITPQEREIAIKAARTMALDVAGVDILRANRGPLVMEVNASPGLEGIEKTTGIDIAGKMIRWIERYATTEYCLKTGG</sequence>
<evidence type="ECO:0000255" key="1">
    <source>
        <dbReference type="HAMAP-Rule" id="MF_01552"/>
    </source>
</evidence>
<keyword id="KW-0067">ATP-binding</keyword>
<keyword id="KW-0436">Ligase</keyword>
<keyword id="KW-0460">Magnesium</keyword>
<keyword id="KW-0464">Manganese</keyword>
<keyword id="KW-0479">Metal-binding</keyword>
<keyword id="KW-0547">Nucleotide-binding</keyword>
<keyword id="KW-0648">Protein biosynthesis</keyword>
<keyword id="KW-1185">Reference proteome</keyword>
<comment type="function">
    <text evidence="1">An L-glutamate ligase that catalyzes the ATP-dependent post-translational addition of glutamate residues to the C-terminus of ribosomal protein bS6 (RpsF). Is also able to catalyze the synthesis of poly-alpha-glutamate in vitro, via ATP hydrolysis from unprotected glutamate as substrate. The number of glutamate residues added to either RpsF or to poly-alpha-glutamate changes with pH.</text>
</comment>
<comment type="cofactor">
    <cofactor evidence="1">
        <name>Mg(2+)</name>
        <dbReference type="ChEBI" id="CHEBI:18420"/>
    </cofactor>
    <cofactor evidence="1">
        <name>Mn(2+)</name>
        <dbReference type="ChEBI" id="CHEBI:29035"/>
    </cofactor>
    <text evidence="1">Binds 2 magnesium or manganese ions per subunit.</text>
</comment>
<comment type="similarity">
    <text evidence="1">Belongs to the RimK family.</text>
</comment>